<keyword id="KW-0067">ATP-binding</keyword>
<keyword id="KW-0133">Cell shape</keyword>
<keyword id="KW-0961">Cell wall biogenesis/degradation</keyword>
<keyword id="KW-0963">Cytoplasm</keyword>
<keyword id="KW-0436">Ligase</keyword>
<keyword id="KW-0460">Magnesium</keyword>
<keyword id="KW-0464">Manganese</keyword>
<keyword id="KW-0479">Metal-binding</keyword>
<keyword id="KW-0547">Nucleotide-binding</keyword>
<keyword id="KW-0573">Peptidoglycan synthesis</keyword>
<keyword id="KW-1185">Reference proteome</keyword>
<comment type="function">
    <text evidence="2">Cell wall formation.</text>
</comment>
<comment type="catalytic activity">
    <reaction evidence="2">
        <text>2 D-alanine + ATP = D-alanyl-D-alanine + ADP + phosphate + H(+)</text>
        <dbReference type="Rhea" id="RHEA:11224"/>
        <dbReference type="ChEBI" id="CHEBI:15378"/>
        <dbReference type="ChEBI" id="CHEBI:30616"/>
        <dbReference type="ChEBI" id="CHEBI:43474"/>
        <dbReference type="ChEBI" id="CHEBI:57416"/>
        <dbReference type="ChEBI" id="CHEBI:57822"/>
        <dbReference type="ChEBI" id="CHEBI:456216"/>
        <dbReference type="EC" id="6.3.2.4"/>
    </reaction>
</comment>
<comment type="cofactor">
    <cofactor evidence="1">
        <name>Mg(2+)</name>
        <dbReference type="ChEBI" id="CHEBI:18420"/>
    </cofactor>
    <cofactor evidence="1">
        <name>Mn(2+)</name>
        <dbReference type="ChEBI" id="CHEBI:29035"/>
    </cofactor>
    <text evidence="1">Binds 2 magnesium or manganese ions per subunit.</text>
</comment>
<comment type="pathway">
    <text evidence="2">Cell wall biogenesis; peptidoglycan biosynthesis.</text>
</comment>
<comment type="subcellular location">
    <subcellularLocation>
        <location evidence="2">Cytoplasm</location>
    </subcellularLocation>
</comment>
<comment type="similarity">
    <text evidence="2">Belongs to the D-alanine--D-alanine ligase family.</text>
</comment>
<feature type="chain" id="PRO_0000177848" description="D-alanine--D-alanine ligase">
    <location>
        <begin position="1"/>
        <end position="366"/>
    </location>
</feature>
<feature type="domain" description="ATP-grasp" evidence="2">
    <location>
        <begin position="144"/>
        <end position="347"/>
    </location>
</feature>
<feature type="binding site" evidence="2">
    <location>
        <begin position="174"/>
        <end position="229"/>
    </location>
    <ligand>
        <name>ATP</name>
        <dbReference type="ChEBI" id="CHEBI:30616"/>
    </ligand>
</feature>
<feature type="binding site" evidence="2">
    <location>
        <position position="301"/>
    </location>
    <ligand>
        <name>Mg(2+)</name>
        <dbReference type="ChEBI" id="CHEBI:18420"/>
        <label>1</label>
    </ligand>
</feature>
<feature type="binding site" evidence="2">
    <location>
        <position position="314"/>
    </location>
    <ligand>
        <name>Mg(2+)</name>
        <dbReference type="ChEBI" id="CHEBI:18420"/>
        <label>1</label>
    </ligand>
</feature>
<feature type="binding site" evidence="2">
    <location>
        <position position="314"/>
    </location>
    <ligand>
        <name>Mg(2+)</name>
        <dbReference type="ChEBI" id="CHEBI:18420"/>
        <label>2</label>
    </ligand>
</feature>
<feature type="binding site" evidence="2">
    <location>
        <position position="316"/>
    </location>
    <ligand>
        <name>Mg(2+)</name>
        <dbReference type="ChEBI" id="CHEBI:18420"/>
        <label>2</label>
    </ligand>
</feature>
<evidence type="ECO:0000250" key="1"/>
<evidence type="ECO:0000255" key="2">
    <source>
        <dbReference type="HAMAP-Rule" id="MF_00047"/>
    </source>
</evidence>
<name>DDL_OCEIH</name>
<gene>
    <name evidence="2" type="primary">ddl</name>
    <name type="synonym">ddlA</name>
    <name type="ordered locus">OB1306</name>
</gene>
<dbReference type="EC" id="6.3.2.4" evidence="2"/>
<dbReference type="EMBL" id="BA000028">
    <property type="protein sequence ID" value="BAC13262.1"/>
    <property type="molecule type" value="Genomic_DNA"/>
</dbReference>
<dbReference type="RefSeq" id="WP_011065710.1">
    <property type="nucleotide sequence ID" value="NC_004193.1"/>
</dbReference>
<dbReference type="SMR" id="Q8ERJ6"/>
<dbReference type="STRING" id="221109.gene:10733546"/>
<dbReference type="KEGG" id="oih:OB1306"/>
<dbReference type="eggNOG" id="COG1181">
    <property type="taxonomic scope" value="Bacteria"/>
</dbReference>
<dbReference type="HOGENOM" id="CLU_039268_0_1_9"/>
<dbReference type="OrthoDB" id="9813261at2"/>
<dbReference type="PhylomeDB" id="Q8ERJ6"/>
<dbReference type="UniPathway" id="UPA00219"/>
<dbReference type="Proteomes" id="UP000000822">
    <property type="component" value="Chromosome"/>
</dbReference>
<dbReference type="GO" id="GO:0005829">
    <property type="term" value="C:cytosol"/>
    <property type="evidence" value="ECO:0007669"/>
    <property type="project" value="TreeGrafter"/>
</dbReference>
<dbReference type="GO" id="GO:0005524">
    <property type="term" value="F:ATP binding"/>
    <property type="evidence" value="ECO:0007669"/>
    <property type="project" value="UniProtKB-KW"/>
</dbReference>
<dbReference type="GO" id="GO:0008716">
    <property type="term" value="F:D-alanine-D-alanine ligase activity"/>
    <property type="evidence" value="ECO:0007669"/>
    <property type="project" value="UniProtKB-UniRule"/>
</dbReference>
<dbReference type="GO" id="GO:0046872">
    <property type="term" value="F:metal ion binding"/>
    <property type="evidence" value="ECO:0007669"/>
    <property type="project" value="UniProtKB-KW"/>
</dbReference>
<dbReference type="GO" id="GO:0071555">
    <property type="term" value="P:cell wall organization"/>
    <property type="evidence" value="ECO:0007669"/>
    <property type="project" value="UniProtKB-KW"/>
</dbReference>
<dbReference type="GO" id="GO:0009252">
    <property type="term" value="P:peptidoglycan biosynthetic process"/>
    <property type="evidence" value="ECO:0007669"/>
    <property type="project" value="UniProtKB-UniRule"/>
</dbReference>
<dbReference type="GO" id="GO:0008360">
    <property type="term" value="P:regulation of cell shape"/>
    <property type="evidence" value="ECO:0007669"/>
    <property type="project" value="UniProtKB-KW"/>
</dbReference>
<dbReference type="FunFam" id="3.30.1490.20:FF:000007">
    <property type="entry name" value="D-alanine--D-alanine ligase"/>
    <property type="match status" value="1"/>
</dbReference>
<dbReference type="FunFam" id="3.30.470.20:FF:000008">
    <property type="entry name" value="D-alanine--D-alanine ligase"/>
    <property type="match status" value="1"/>
</dbReference>
<dbReference type="Gene3D" id="3.40.50.20">
    <property type="match status" value="1"/>
</dbReference>
<dbReference type="Gene3D" id="3.30.1490.20">
    <property type="entry name" value="ATP-grasp fold, A domain"/>
    <property type="match status" value="1"/>
</dbReference>
<dbReference type="Gene3D" id="3.30.470.20">
    <property type="entry name" value="ATP-grasp fold, B domain"/>
    <property type="match status" value="1"/>
</dbReference>
<dbReference type="HAMAP" id="MF_00047">
    <property type="entry name" value="Dala_Dala_lig"/>
    <property type="match status" value="1"/>
</dbReference>
<dbReference type="InterPro" id="IPR011761">
    <property type="entry name" value="ATP-grasp"/>
</dbReference>
<dbReference type="InterPro" id="IPR013815">
    <property type="entry name" value="ATP_grasp_subdomain_1"/>
</dbReference>
<dbReference type="InterPro" id="IPR000291">
    <property type="entry name" value="D-Ala_lig_Van_CS"/>
</dbReference>
<dbReference type="InterPro" id="IPR005905">
    <property type="entry name" value="D_ala_D_ala"/>
</dbReference>
<dbReference type="InterPro" id="IPR011095">
    <property type="entry name" value="Dala_Dala_lig_C"/>
</dbReference>
<dbReference type="InterPro" id="IPR011127">
    <property type="entry name" value="Dala_Dala_lig_N"/>
</dbReference>
<dbReference type="InterPro" id="IPR016185">
    <property type="entry name" value="PreATP-grasp_dom_sf"/>
</dbReference>
<dbReference type="NCBIfam" id="TIGR01205">
    <property type="entry name" value="D_ala_D_alaTIGR"/>
    <property type="match status" value="1"/>
</dbReference>
<dbReference type="NCBIfam" id="NF002378">
    <property type="entry name" value="PRK01372.1"/>
    <property type="match status" value="1"/>
</dbReference>
<dbReference type="NCBIfam" id="NF002525">
    <property type="entry name" value="PRK01966.1-1"/>
    <property type="match status" value="1"/>
</dbReference>
<dbReference type="NCBIfam" id="NF002528">
    <property type="entry name" value="PRK01966.1-4"/>
    <property type="match status" value="1"/>
</dbReference>
<dbReference type="PANTHER" id="PTHR23132">
    <property type="entry name" value="D-ALANINE--D-ALANINE LIGASE"/>
    <property type="match status" value="1"/>
</dbReference>
<dbReference type="PANTHER" id="PTHR23132:SF25">
    <property type="entry name" value="D-ALANINE--D-ALANINE LIGASE A"/>
    <property type="match status" value="1"/>
</dbReference>
<dbReference type="Pfam" id="PF07478">
    <property type="entry name" value="Dala_Dala_lig_C"/>
    <property type="match status" value="1"/>
</dbReference>
<dbReference type="Pfam" id="PF01820">
    <property type="entry name" value="Dala_Dala_lig_N"/>
    <property type="match status" value="1"/>
</dbReference>
<dbReference type="PIRSF" id="PIRSF039102">
    <property type="entry name" value="Ddl/VanB"/>
    <property type="match status" value="1"/>
</dbReference>
<dbReference type="SUPFAM" id="SSF56059">
    <property type="entry name" value="Glutathione synthetase ATP-binding domain-like"/>
    <property type="match status" value="1"/>
</dbReference>
<dbReference type="SUPFAM" id="SSF52440">
    <property type="entry name" value="PreATP-grasp domain"/>
    <property type="match status" value="1"/>
</dbReference>
<dbReference type="PROSITE" id="PS50975">
    <property type="entry name" value="ATP_GRASP"/>
    <property type="match status" value="1"/>
</dbReference>
<dbReference type="PROSITE" id="PS00843">
    <property type="entry name" value="DALA_DALA_LIGASE_1"/>
    <property type="match status" value="1"/>
</dbReference>
<dbReference type="PROSITE" id="PS00844">
    <property type="entry name" value="DALA_DALA_LIGASE_2"/>
    <property type="match status" value="1"/>
</dbReference>
<proteinExistence type="inferred from homology"/>
<sequence length="366" mass="40373">MKKKVGIVFGGKSAEHEVSLQSAKNIVDAIDSDKYDVYLLGIDKQGNWHVNDRSHYLINEEDPKLISLNKTNEGIAVIPGAEKNQIVTSNSTKSLDQLDVIFPIVHGTLGEDGSLQGMLRMANIPFVGSSVLGSAISMDKDIAKRLLKDAGLKVAKGYAYRSVDKESIHFDSLKEELGLPMFIKPANQGSSVGVHKVENEEQFYSAIKDAFQFDHKLLVEEAIVGREIECAVLGNEKPAASVPGEILPTGDFYSYEAKYIDETGAVLQIPAKLEEPVVDSIQDIALQAFKALNCEGLARVDVFLTDDNEIVINEINTLPGFTKISMYPKLWEESGVSYRELIENLIELAIERNQRDQQLKSSRSDG</sequence>
<protein>
    <recommendedName>
        <fullName evidence="2">D-alanine--D-alanine ligase</fullName>
        <ecNumber evidence="2">6.3.2.4</ecNumber>
    </recommendedName>
    <alternativeName>
        <fullName evidence="2">D-Ala-D-Ala ligase</fullName>
    </alternativeName>
    <alternativeName>
        <fullName evidence="2">D-alanylalanine synthetase</fullName>
    </alternativeName>
</protein>
<organism>
    <name type="scientific">Oceanobacillus iheyensis (strain DSM 14371 / CIP 107618 / JCM 11309 / KCTC 3954 / HTE831)</name>
    <dbReference type="NCBI Taxonomy" id="221109"/>
    <lineage>
        <taxon>Bacteria</taxon>
        <taxon>Bacillati</taxon>
        <taxon>Bacillota</taxon>
        <taxon>Bacilli</taxon>
        <taxon>Bacillales</taxon>
        <taxon>Bacillaceae</taxon>
        <taxon>Oceanobacillus</taxon>
    </lineage>
</organism>
<accession>Q8ERJ6</accession>
<reference key="1">
    <citation type="journal article" date="2002" name="Nucleic Acids Res.">
        <title>Genome sequence of Oceanobacillus iheyensis isolated from the Iheya Ridge and its unexpected adaptive capabilities to extreme environments.</title>
        <authorList>
            <person name="Takami H."/>
            <person name="Takaki Y."/>
            <person name="Uchiyama I."/>
        </authorList>
    </citation>
    <scope>NUCLEOTIDE SEQUENCE [LARGE SCALE GENOMIC DNA]</scope>
    <source>
        <strain>DSM 14371 / CIP 107618 / JCM 11309 / KCTC 3954 / HTE831</strain>
    </source>
</reference>